<evidence type="ECO:0000255" key="1">
    <source>
        <dbReference type="HAMAP-Rule" id="MF_01865"/>
    </source>
</evidence>
<evidence type="ECO:0000255" key="2">
    <source>
        <dbReference type="PROSITE-ProRule" id="PRU01266"/>
    </source>
</evidence>
<protein>
    <recommendedName>
        <fullName evidence="1">Ribosomal protein uS12 methylthiotransferase RimO</fullName>
        <shortName evidence="1">uS12 MTTase</shortName>
        <shortName evidence="1">uS12 methylthiotransferase</shortName>
        <ecNumber evidence="1">2.8.4.4</ecNumber>
    </recommendedName>
    <alternativeName>
        <fullName evidence="1">Ribosomal protein uS12 (aspartate-C(3))-methylthiotransferase</fullName>
    </alternativeName>
    <alternativeName>
        <fullName evidence="1">Ribosome maturation factor RimO</fullName>
    </alternativeName>
</protein>
<sequence length="435" mass="49390">MSKKLHVVSLGCTKNLVDTEVMLARLPEYEITQIPEEADLIIVNTCGFIGPAKEESLQTVFDLHSRRKKDSTLVMAGCLSERYKEELQKEMPEVDIFTGVGDYAKIDELISQKKSSFSDQVYLIRSEERIITGSNYHAYIKLSEGCNQQCSFCAIPSFKGKLQSRPIEDIVQEIKNLVAKGYKDFTFVSQDSSSYLRDFGIQESLVDLIHAVEEIEGIMSARILYLYPSTTTPKMIDAIANSPVFVNYFEMPIQHISDSLLKKMKRGIGAQKTKELLYAMRAVPESFLRTSLIVGHPGESEEDFHELVEFLEDFEFDRINLFAYSDEEGTKAYEMEEKIPQEVIEERLAILDAIVKKQQMKSLEKDLGKTVECYLDGTSEESELLLSGRKKIWAPEVDGEILINDSEIDNLQIGNLYKVHINERLGDKLVGTVRA</sequence>
<dbReference type="EC" id="2.8.4.4" evidence="1"/>
<dbReference type="EMBL" id="AP009178">
    <property type="protein sequence ID" value="BAF70585.1"/>
    <property type="molecule type" value="Genomic_DNA"/>
</dbReference>
<dbReference type="RefSeq" id="WP_012082848.1">
    <property type="nucleotide sequence ID" value="NC_009662.1"/>
</dbReference>
<dbReference type="SMR" id="A6Q526"/>
<dbReference type="FunCoup" id="A6Q526">
    <property type="interactions" value="332"/>
</dbReference>
<dbReference type="STRING" id="387092.NIS_1478"/>
<dbReference type="KEGG" id="nis:NIS_1478"/>
<dbReference type="eggNOG" id="COG0621">
    <property type="taxonomic scope" value="Bacteria"/>
</dbReference>
<dbReference type="HOGENOM" id="CLU_018697_0_1_7"/>
<dbReference type="InParanoid" id="A6Q526"/>
<dbReference type="OrthoDB" id="9805215at2"/>
<dbReference type="Proteomes" id="UP000001118">
    <property type="component" value="Chromosome"/>
</dbReference>
<dbReference type="GO" id="GO:0005829">
    <property type="term" value="C:cytosol"/>
    <property type="evidence" value="ECO:0007669"/>
    <property type="project" value="TreeGrafter"/>
</dbReference>
<dbReference type="GO" id="GO:0051539">
    <property type="term" value="F:4 iron, 4 sulfur cluster binding"/>
    <property type="evidence" value="ECO:0007669"/>
    <property type="project" value="UniProtKB-UniRule"/>
</dbReference>
<dbReference type="GO" id="GO:0035599">
    <property type="term" value="F:aspartic acid methylthiotransferase activity"/>
    <property type="evidence" value="ECO:0007669"/>
    <property type="project" value="TreeGrafter"/>
</dbReference>
<dbReference type="GO" id="GO:0046872">
    <property type="term" value="F:metal ion binding"/>
    <property type="evidence" value="ECO:0007669"/>
    <property type="project" value="UniProtKB-KW"/>
</dbReference>
<dbReference type="GO" id="GO:0103039">
    <property type="term" value="F:protein methylthiotransferase activity"/>
    <property type="evidence" value="ECO:0007669"/>
    <property type="project" value="UniProtKB-EC"/>
</dbReference>
<dbReference type="GO" id="GO:0006400">
    <property type="term" value="P:tRNA modification"/>
    <property type="evidence" value="ECO:0007669"/>
    <property type="project" value="InterPro"/>
</dbReference>
<dbReference type="CDD" id="cd01335">
    <property type="entry name" value="Radical_SAM"/>
    <property type="match status" value="1"/>
</dbReference>
<dbReference type="FunFam" id="3.80.30.20:FF:000001">
    <property type="entry name" value="tRNA-2-methylthio-N(6)-dimethylallyladenosine synthase 2"/>
    <property type="match status" value="1"/>
</dbReference>
<dbReference type="Gene3D" id="3.40.50.12160">
    <property type="entry name" value="Methylthiotransferase, N-terminal domain"/>
    <property type="match status" value="1"/>
</dbReference>
<dbReference type="Gene3D" id="2.40.50.140">
    <property type="entry name" value="Nucleic acid-binding proteins"/>
    <property type="match status" value="1"/>
</dbReference>
<dbReference type="Gene3D" id="3.80.30.20">
    <property type="entry name" value="tm_1862 like domain"/>
    <property type="match status" value="1"/>
</dbReference>
<dbReference type="HAMAP" id="MF_01865">
    <property type="entry name" value="MTTase_RimO"/>
    <property type="match status" value="1"/>
</dbReference>
<dbReference type="InterPro" id="IPR006638">
    <property type="entry name" value="Elp3/MiaA/NifB-like_rSAM"/>
</dbReference>
<dbReference type="InterPro" id="IPR005839">
    <property type="entry name" value="Methylthiotransferase"/>
</dbReference>
<dbReference type="InterPro" id="IPR020612">
    <property type="entry name" value="Methylthiotransferase_CS"/>
</dbReference>
<dbReference type="InterPro" id="IPR013848">
    <property type="entry name" value="Methylthiotransferase_N"/>
</dbReference>
<dbReference type="InterPro" id="IPR038135">
    <property type="entry name" value="Methylthiotransferase_N_sf"/>
</dbReference>
<dbReference type="InterPro" id="IPR012340">
    <property type="entry name" value="NA-bd_OB-fold"/>
</dbReference>
<dbReference type="InterPro" id="IPR005840">
    <property type="entry name" value="Ribosomal_uS12_MeSTrfase_RimO"/>
</dbReference>
<dbReference type="InterPro" id="IPR007197">
    <property type="entry name" value="rSAM"/>
</dbReference>
<dbReference type="InterPro" id="IPR023404">
    <property type="entry name" value="rSAM_horseshoe"/>
</dbReference>
<dbReference type="InterPro" id="IPR002792">
    <property type="entry name" value="TRAM_dom"/>
</dbReference>
<dbReference type="NCBIfam" id="TIGR01125">
    <property type="entry name" value="30S ribosomal protein S12 methylthiotransferase RimO"/>
    <property type="match status" value="1"/>
</dbReference>
<dbReference type="NCBIfam" id="TIGR00089">
    <property type="entry name" value="MiaB/RimO family radical SAM methylthiotransferase"/>
    <property type="match status" value="1"/>
</dbReference>
<dbReference type="PANTHER" id="PTHR43837">
    <property type="entry name" value="RIBOSOMAL PROTEIN S12 METHYLTHIOTRANSFERASE RIMO"/>
    <property type="match status" value="1"/>
</dbReference>
<dbReference type="PANTHER" id="PTHR43837:SF1">
    <property type="entry name" value="RIBOSOMAL PROTEIN US12 METHYLTHIOTRANSFERASE RIMO"/>
    <property type="match status" value="1"/>
</dbReference>
<dbReference type="Pfam" id="PF04055">
    <property type="entry name" value="Radical_SAM"/>
    <property type="match status" value="1"/>
</dbReference>
<dbReference type="Pfam" id="PF18693">
    <property type="entry name" value="TRAM_2"/>
    <property type="match status" value="1"/>
</dbReference>
<dbReference type="Pfam" id="PF00919">
    <property type="entry name" value="UPF0004"/>
    <property type="match status" value="1"/>
</dbReference>
<dbReference type="SFLD" id="SFLDG01082">
    <property type="entry name" value="B12-binding_domain_containing"/>
    <property type="match status" value="1"/>
</dbReference>
<dbReference type="SFLD" id="SFLDS00029">
    <property type="entry name" value="Radical_SAM"/>
    <property type="match status" value="1"/>
</dbReference>
<dbReference type="SFLD" id="SFLDF00274">
    <property type="entry name" value="ribosomal_protein_S12_methylth"/>
    <property type="match status" value="1"/>
</dbReference>
<dbReference type="SMART" id="SM00729">
    <property type="entry name" value="Elp3"/>
    <property type="match status" value="1"/>
</dbReference>
<dbReference type="SUPFAM" id="SSF102114">
    <property type="entry name" value="Radical SAM enzymes"/>
    <property type="match status" value="1"/>
</dbReference>
<dbReference type="PROSITE" id="PS51449">
    <property type="entry name" value="MTTASE_N"/>
    <property type="match status" value="1"/>
</dbReference>
<dbReference type="PROSITE" id="PS01278">
    <property type="entry name" value="MTTASE_RADICAL"/>
    <property type="match status" value="1"/>
</dbReference>
<dbReference type="PROSITE" id="PS51918">
    <property type="entry name" value="RADICAL_SAM"/>
    <property type="match status" value="1"/>
</dbReference>
<organism>
    <name type="scientific">Nitratiruptor sp. (strain SB155-2)</name>
    <dbReference type="NCBI Taxonomy" id="387092"/>
    <lineage>
        <taxon>Bacteria</taxon>
        <taxon>Pseudomonadati</taxon>
        <taxon>Campylobacterota</taxon>
        <taxon>Epsilonproteobacteria</taxon>
        <taxon>Nautiliales</taxon>
        <taxon>Nitratiruptoraceae</taxon>
        <taxon>Nitratiruptor</taxon>
    </lineage>
</organism>
<proteinExistence type="inferred from homology"/>
<gene>
    <name evidence="1" type="primary">rimO</name>
    <name type="ordered locus">NIS_1478</name>
</gene>
<reference key="1">
    <citation type="journal article" date="2007" name="Proc. Natl. Acad. Sci. U.S.A.">
        <title>Deep-sea vent epsilon-proteobacterial genomes provide insights into emergence of pathogens.</title>
        <authorList>
            <person name="Nakagawa S."/>
            <person name="Takaki Y."/>
            <person name="Shimamura S."/>
            <person name="Reysenbach A.-L."/>
            <person name="Takai K."/>
            <person name="Horikoshi K."/>
        </authorList>
    </citation>
    <scope>NUCLEOTIDE SEQUENCE [LARGE SCALE GENOMIC DNA]</scope>
    <source>
        <strain>SB155-2</strain>
    </source>
</reference>
<accession>A6Q526</accession>
<feature type="chain" id="PRO_0000374901" description="Ribosomal protein uS12 methylthiotransferase RimO">
    <location>
        <begin position="1"/>
        <end position="435"/>
    </location>
</feature>
<feature type="domain" description="MTTase N-terminal" evidence="1">
    <location>
        <begin position="3"/>
        <end position="115"/>
    </location>
</feature>
<feature type="domain" description="Radical SAM core" evidence="2">
    <location>
        <begin position="132"/>
        <end position="361"/>
    </location>
</feature>
<feature type="binding site" evidence="1">
    <location>
        <position position="12"/>
    </location>
    <ligand>
        <name>[4Fe-4S] cluster</name>
        <dbReference type="ChEBI" id="CHEBI:49883"/>
        <label>1</label>
    </ligand>
</feature>
<feature type="binding site" evidence="1">
    <location>
        <position position="46"/>
    </location>
    <ligand>
        <name>[4Fe-4S] cluster</name>
        <dbReference type="ChEBI" id="CHEBI:49883"/>
        <label>1</label>
    </ligand>
</feature>
<feature type="binding site" evidence="1">
    <location>
        <position position="78"/>
    </location>
    <ligand>
        <name>[4Fe-4S] cluster</name>
        <dbReference type="ChEBI" id="CHEBI:49883"/>
        <label>1</label>
    </ligand>
</feature>
<feature type="binding site" evidence="1">
    <location>
        <position position="146"/>
    </location>
    <ligand>
        <name>[4Fe-4S] cluster</name>
        <dbReference type="ChEBI" id="CHEBI:49883"/>
        <label>2</label>
        <note>4Fe-4S-S-AdoMet</note>
    </ligand>
</feature>
<feature type="binding site" evidence="1">
    <location>
        <position position="150"/>
    </location>
    <ligand>
        <name>[4Fe-4S] cluster</name>
        <dbReference type="ChEBI" id="CHEBI:49883"/>
        <label>2</label>
        <note>4Fe-4S-S-AdoMet</note>
    </ligand>
</feature>
<feature type="binding site" evidence="1">
    <location>
        <position position="153"/>
    </location>
    <ligand>
        <name>[4Fe-4S] cluster</name>
        <dbReference type="ChEBI" id="CHEBI:49883"/>
        <label>2</label>
        <note>4Fe-4S-S-AdoMet</note>
    </ligand>
</feature>
<comment type="function">
    <text evidence="1">Catalyzes the methylthiolation of an aspartic acid residue of ribosomal protein uS12.</text>
</comment>
<comment type="catalytic activity">
    <reaction evidence="1">
        <text>L-aspartate(89)-[ribosomal protein uS12]-hydrogen + (sulfur carrier)-SH + AH2 + 2 S-adenosyl-L-methionine = 3-methylsulfanyl-L-aspartate(89)-[ribosomal protein uS12]-hydrogen + (sulfur carrier)-H + 5'-deoxyadenosine + L-methionine + A + S-adenosyl-L-homocysteine + 2 H(+)</text>
        <dbReference type="Rhea" id="RHEA:37087"/>
        <dbReference type="Rhea" id="RHEA-COMP:10460"/>
        <dbReference type="Rhea" id="RHEA-COMP:10461"/>
        <dbReference type="Rhea" id="RHEA-COMP:14737"/>
        <dbReference type="Rhea" id="RHEA-COMP:14739"/>
        <dbReference type="ChEBI" id="CHEBI:13193"/>
        <dbReference type="ChEBI" id="CHEBI:15378"/>
        <dbReference type="ChEBI" id="CHEBI:17319"/>
        <dbReference type="ChEBI" id="CHEBI:17499"/>
        <dbReference type="ChEBI" id="CHEBI:29917"/>
        <dbReference type="ChEBI" id="CHEBI:29961"/>
        <dbReference type="ChEBI" id="CHEBI:57844"/>
        <dbReference type="ChEBI" id="CHEBI:57856"/>
        <dbReference type="ChEBI" id="CHEBI:59789"/>
        <dbReference type="ChEBI" id="CHEBI:64428"/>
        <dbReference type="ChEBI" id="CHEBI:73599"/>
        <dbReference type="EC" id="2.8.4.4"/>
    </reaction>
</comment>
<comment type="cofactor">
    <cofactor evidence="1">
        <name>[4Fe-4S] cluster</name>
        <dbReference type="ChEBI" id="CHEBI:49883"/>
    </cofactor>
    <text evidence="1">Binds 2 [4Fe-4S] clusters. One cluster is coordinated with 3 cysteines and an exchangeable S-adenosyl-L-methionine.</text>
</comment>
<comment type="subcellular location">
    <subcellularLocation>
        <location evidence="1">Cytoplasm</location>
    </subcellularLocation>
</comment>
<comment type="similarity">
    <text evidence="1">Belongs to the methylthiotransferase family. RimO subfamily.</text>
</comment>
<name>RIMO_NITSB</name>
<keyword id="KW-0004">4Fe-4S</keyword>
<keyword id="KW-0963">Cytoplasm</keyword>
<keyword id="KW-0408">Iron</keyword>
<keyword id="KW-0411">Iron-sulfur</keyword>
<keyword id="KW-0479">Metal-binding</keyword>
<keyword id="KW-1185">Reference proteome</keyword>
<keyword id="KW-0949">S-adenosyl-L-methionine</keyword>
<keyword id="KW-0808">Transferase</keyword>